<proteinExistence type="evidence at transcript level"/>
<dbReference type="EC" id="2.7.4.6"/>
<dbReference type="EMBL" id="D10659">
    <property type="protein sequence ID" value="BAA01510.1"/>
    <property type="molecule type" value="mRNA"/>
</dbReference>
<dbReference type="PIR" id="S24165">
    <property type="entry name" value="S24165"/>
</dbReference>
<dbReference type="SMR" id="Q02254"/>
<dbReference type="Proteomes" id="UP001155700">
    <property type="component" value="Unplaced"/>
</dbReference>
<dbReference type="GO" id="GO:0005524">
    <property type="term" value="F:ATP binding"/>
    <property type="evidence" value="ECO:0007669"/>
    <property type="project" value="UniProtKB-KW"/>
</dbReference>
<dbReference type="GO" id="GO:0046872">
    <property type="term" value="F:metal ion binding"/>
    <property type="evidence" value="ECO:0007669"/>
    <property type="project" value="UniProtKB-KW"/>
</dbReference>
<dbReference type="GO" id="GO:0004550">
    <property type="term" value="F:nucleoside diphosphate kinase activity"/>
    <property type="evidence" value="ECO:0007669"/>
    <property type="project" value="UniProtKB-EC"/>
</dbReference>
<dbReference type="GO" id="GO:0006241">
    <property type="term" value="P:CTP biosynthetic process"/>
    <property type="evidence" value="ECO:0007669"/>
    <property type="project" value="InterPro"/>
</dbReference>
<dbReference type="GO" id="GO:0006183">
    <property type="term" value="P:GTP biosynthetic process"/>
    <property type="evidence" value="ECO:0007669"/>
    <property type="project" value="InterPro"/>
</dbReference>
<dbReference type="GO" id="GO:0006228">
    <property type="term" value="P:UTP biosynthetic process"/>
    <property type="evidence" value="ECO:0007669"/>
    <property type="project" value="InterPro"/>
</dbReference>
<dbReference type="CDD" id="cd04413">
    <property type="entry name" value="NDPk_I"/>
    <property type="match status" value="1"/>
</dbReference>
<dbReference type="FunFam" id="3.30.70.141:FF:000002">
    <property type="entry name" value="Nucleoside diphosphate kinase"/>
    <property type="match status" value="1"/>
</dbReference>
<dbReference type="Gene3D" id="3.30.70.141">
    <property type="entry name" value="Nucleoside diphosphate kinase-like domain"/>
    <property type="match status" value="1"/>
</dbReference>
<dbReference type="HAMAP" id="MF_00451">
    <property type="entry name" value="NDP_kinase"/>
    <property type="match status" value="1"/>
</dbReference>
<dbReference type="InterPro" id="IPR034907">
    <property type="entry name" value="NDK-like_dom"/>
</dbReference>
<dbReference type="InterPro" id="IPR036850">
    <property type="entry name" value="NDK-like_dom_sf"/>
</dbReference>
<dbReference type="InterPro" id="IPR001564">
    <property type="entry name" value="Nucleoside_diP_kinase"/>
</dbReference>
<dbReference type="InterPro" id="IPR023005">
    <property type="entry name" value="Nucleoside_diP_kinase_AS"/>
</dbReference>
<dbReference type="NCBIfam" id="NF001908">
    <property type="entry name" value="PRK00668.1"/>
    <property type="match status" value="1"/>
</dbReference>
<dbReference type="PANTHER" id="PTHR11349">
    <property type="entry name" value="NUCLEOSIDE DIPHOSPHATE KINASE"/>
    <property type="match status" value="1"/>
</dbReference>
<dbReference type="Pfam" id="PF00334">
    <property type="entry name" value="NDK"/>
    <property type="match status" value="1"/>
</dbReference>
<dbReference type="PRINTS" id="PR01243">
    <property type="entry name" value="NUCDPKINASE"/>
</dbReference>
<dbReference type="SMART" id="SM00562">
    <property type="entry name" value="NDK"/>
    <property type="match status" value="1"/>
</dbReference>
<dbReference type="SUPFAM" id="SSF54919">
    <property type="entry name" value="Nucleoside diphosphate kinase, NDK"/>
    <property type="match status" value="1"/>
</dbReference>
<dbReference type="PROSITE" id="PS00469">
    <property type="entry name" value="NDPK"/>
    <property type="match status" value="1"/>
</dbReference>
<dbReference type="PROSITE" id="PS51374">
    <property type="entry name" value="NDPK_LIKE"/>
    <property type="match status" value="1"/>
</dbReference>
<evidence type="ECO:0000250" key="1"/>
<evidence type="ECO:0000305" key="2"/>
<accession>Q02254</accession>
<comment type="function">
    <text>Major role in the synthesis of nucleoside triphosphates other than ATP. The ATP gamma phosphate is transferred to the NDP beta phosphate via a ping-pong mechanism, using a phosphorylated active-site intermediate.</text>
</comment>
<comment type="catalytic activity">
    <reaction>
        <text>a 2'-deoxyribonucleoside 5'-diphosphate + ATP = a 2'-deoxyribonucleoside 5'-triphosphate + ADP</text>
        <dbReference type="Rhea" id="RHEA:44640"/>
        <dbReference type="ChEBI" id="CHEBI:30616"/>
        <dbReference type="ChEBI" id="CHEBI:61560"/>
        <dbReference type="ChEBI" id="CHEBI:73316"/>
        <dbReference type="ChEBI" id="CHEBI:456216"/>
        <dbReference type="EC" id="2.7.4.6"/>
    </reaction>
</comment>
<comment type="catalytic activity">
    <reaction>
        <text>a ribonucleoside 5'-diphosphate + ATP = a ribonucleoside 5'-triphosphate + ADP</text>
        <dbReference type="Rhea" id="RHEA:18113"/>
        <dbReference type="ChEBI" id="CHEBI:30616"/>
        <dbReference type="ChEBI" id="CHEBI:57930"/>
        <dbReference type="ChEBI" id="CHEBI:61557"/>
        <dbReference type="ChEBI" id="CHEBI:456216"/>
        <dbReference type="EC" id="2.7.4.6"/>
    </reaction>
</comment>
<comment type="cofactor">
    <cofactor evidence="1">
        <name>Mg(2+)</name>
        <dbReference type="ChEBI" id="CHEBI:18420"/>
    </cofactor>
</comment>
<comment type="PTM">
    <text>The N-terminus is blocked.</text>
</comment>
<comment type="similarity">
    <text evidence="2">Belongs to the NDK family.</text>
</comment>
<gene>
    <name type="primary">NDPK1</name>
</gene>
<keyword id="KW-0067">ATP-binding</keyword>
<keyword id="KW-0418">Kinase</keyword>
<keyword id="KW-0460">Magnesium</keyword>
<keyword id="KW-0479">Metal-binding</keyword>
<keyword id="KW-0546">Nucleotide metabolism</keyword>
<keyword id="KW-0547">Nucleotide-binding</keyword>
<keyword id="KW-0597">Phosphoprotein</keyword>
<keyword id="KW-1185">Reference proteome</keyword>
<keyword id="KW-0808">Transferase</keyword>
<sequence length="148" mass="16290">MEQTFIMIKPDGVQRGLVGEIISRFEKKGFSLKALKFVNVDRPFAEKHYADLSAKPFFNGLVEYIVSGPVVAMVWEGKGVVATGRKLIGATNPLASEPGTIRGDFAIDIGRNVIHGSDAVDSATKEIALWFPDGVVHWQSSLHSWIYE</sequence>
<organism>
    <name type="scientific">Spinacia oleracea</name>
    <name type="common">Spinach</name>
    <dbReference type="NCBI Taxonomy" id="3562"/>
    <lineage>
        <taxon>Eukaryota</taxon>
        <taxon>Viridiplantae</taxon>
        <taxon>Streptophyta</taxon>
        <taxon>Embryophyta</taxon>
        <taxon>Tracheophyta</taxon>
        <taxon>Spermatophyta</taxon>
        <taxon>Magnoliopsida</taxon>
        <taxon>eudicotyledons</taxon>
        <taxon>Gunneridae</taxon>
        <taxon>Pentapetalae</taxon>
        <taxon>Caryophyllales</taxon>
        <taxon>Chenopodiaceae</taxon>
        <taxon>Chenopodioideae</taxon>
        <taxon>Anserineae</taxon>
        <taxon>Spinacia</taxon>
    </lineage>
</organism>
<protein>
    <recommendedName>
        <fullName>Nucleoside diphosphate kinase 1</fullName>
        <ecNumber>2.7.4.6</ecNumber>
    </recommendedName>
    <alternativeName>
        <fullName>Nucleoside diphosphate kinase I</fullName>
        <shortName>NDK I</shortName>
        <shortName>NDP kinase I</shortName>
        <shortName>NDPK I</shortName>
    </alternativeName>
</protein>
<reference key="1">
    <citation type="journal article" date="1992" name="Arch. Biochem. Biophys.">
        <title>The amino acid sequence of nucleoside diphosphate kinase I from spinach leaves, as deduced from the cDNA sequence.</title>
        <authorList>
            <person name="Nomura T."/>
            <person name="Yatsunami K."/>
            <person name="Honda A."/>
            <person name="Sugimoto Y."/>
            <person name="Fukui T."/>
            <person name="Zhang J."/>
            <person name="Yamamoto J."/>
            <person name="Ichikawa A."/>
        </authorList>
    </citation>
    <scope>NUCLEOTIDE SEQUENCE [MRNA]</scope>
    <source>
        <tissue>Leaf</tissue>
    </source>
</reference>
<name>NDK1_SPIOL</name>
<feature type="chain" id="PRO_0000137145" description="Nucleoside diphosphate kinase 1">
    <location>
        <begin position="1"/>
        <end position="148"/>
    </location>
</feature>
<feature type="active site" description="Pros-phosphohistidine intermediate" evidence="1">
    <location>
        <position position="115"/>
    </location>
</feature>
<feature type="binding site" evidence="1">
    <location>
        <position position="9"/>
    </location>
    <ligand>
        <name>ATP</name>
        <dbReference type="ChEBI" id="CHEBI:30616"/>
    </ligand>
</feature>
<feature type="binding site" evidence="1">
    <location>
        <position position="57"/>
    </location>
    <ligand>
        <name>ATP</name>
        <dbReference type="ChEBI" id="CHEBI:30616"/>
    </ligand>
</feature>
<feature type="binding site" evidence="1">
    <location>
        <position position="85"/>
    </location>
    <ligand>
        <name>ATP</name>
        <dbReference type="ChEBI" id="CHEBI:30616"/>
    </ligand>
</feature>
<feature type="binding site" evidence="1">
    <location>
        <position position="91"/>
    </location>
    <ligand>
        <name>ATP</name>
        <dbReference type="ChEBI" id="CHEBI:30616"/>
    </ligand>
</feature>
<feature type="binding site" evidence="1">
    <location>
        <position position="102"/>
    </location>
    <ligand>
        <name>ATP</name>
        <dbReference type="ChEBI" id="CHEBI:30616"/>
    </ligand>
</feature>
<feature type="binding site" evidence="1">
    <location>
        <position position="112"/>
    </location>
    <ligand>
        <name>ATP</name>
        <dbReference type="ChEBI" id="CHEBI:30616"/>
    </ligand>
</feature>